<proteinExistence type="inferred from homology"/>
<sequence length="443" mass="48509">MKIGIINTKIRTVFSAFACMIAASLVCTMPARAVVEININKGVIEPLPIAITDFLSADQLGSNITSVIAADLERSGLFAPIDKGAFIEKISNPDAAPRFEDWKVINAQALVTGRITKQPDGRLKAEFHLWDTFGGQQMIGQQFFTTPDNWRRVAHIIADAIYERLTGDKGYFDTRVVFVDESGPAQKRVKRLAIMDQDGANVRFISDGRALSLTPRFSPNRQEVTYMSFEGGSPKVYLLQLETGQRELVGNFPGMTIAPRFSPDGQKVVMSLLQDDGSANIYTMDLRNRTTTRLTSSQAIDTGASYSPDGSQIVFTSDRGGRPQLYVMGADGSNPRRISMGDGSYSTPVWSPRGDLIAFTKQSQGQFSIGVMKTDGSGERLLTSGFHNEGPTWAPNGRVLMFFRKAAGAGGPKLFTIDLTGRNERQIQTPNFASDPAWSPLLE</sequence>
<keyword id="KW-0131">Cell cycle</keyword>
<keyword id="KW-0132">Cell division</keyword>
<keyword id="KW-0574">Periplasm</keyword>
<keyword id="KW-0732">Signal</keyword>
<protein>
    <recommendedName>
        <fullName evidence="1">Tol-Pal system protein TolB</fullName>
    </recommendedName>
</protein>
<evidence type="ECO:0000255" key="1">
    <source>
        <dbReference type="HAMAP-Rule" id="MF_00671"/>
    </source>
</evidence>
<reference key="1">
    <citation type="journal article" date="2002" name="Proc. Natl. Acad. Sci. U.S.A.">
        <title>The Brucella suis genome reveals fundamental similarities between animal and plant pathogens and symbionts.</title>
        <authorList>
            <person name="Paulsen I.T."/>
            <person name="Seshadri R."/>
            <person name="Nelson K.E."/>
            <person name="Eisen J.A."/>
            <person name="Heidelberg J.F."/>
            <person name="Read T.D."/>
            <person name="Dodson R.J."/>
            <person name="Umayam L.A."/>
            <person name="Brinkac L.M."/>
            <person name="Beanan M.J."/>
            <person name="Daugherty S.C."/>
            <person name="DeBoy R.T."/>
            <person name="Durkin A.S."/>
            <person name="Kolonay J.F."/>
            <person name="Madupu R."/>
            <person name="Nelson W.C."/>
            <person name="Ayodeji B."/>
            <person name="Kraul M."/>
            <person name="Shetty J."/>
            <person name="Malek J.A."/>
            <person name="Van Aken S.E."/>
            <person name="Riedmuller S."/>
            <person name="Tettelin H."/>
            <person name="Gill S.R."/>
            <person name="White O."/>
            <person name="Salzberg S.L."/>
            <person name="Hoover D.L."/>
            <person name="Lindler L.E."/>
            <person name="Halling S.M."/>
            <person name="Boyle S.M."/>
            <person name="Fraser C.M."/>
        </authorList>
    </citation>
    <scope>NUCLEOTIDE SEQUENCE [LARGE SCALE GENOMIC DNA]</scope>
    <source>
        <strain>1330</strain>
    </source>
</reference>
<reference key="2">
    <citation type="journal article" date="2011" name="J. Bacteriol.">
        <title>Revised genome sequence of Brucella suis 1330.</title>
        <authorList>
            <person name="Tae H."/>
            <person name="Shallom S."/>
            <person name="Settlage R."/>
            <person name="Preston D."/>
            <person name="Adams L.G."/>
            <person name="Garner H.R."/>
        </authorList>
    </citation>
    <scope>NUCLEOTIDE SEQUENCE [LARGE SCALE GENOMIC DNA]</scope>
    <source>
        <strain>1330</strain>
    </source>
</reference>
<comment type="function">
    <text evidence="1">Part of the Tol-Pal system, which plays a role in outer membrane invagination during cell division and is important for maintaining outer membrane integrity.</text>
</comment>
<comment type="subunit">
    <text evidence="1">The Tol-Pal system is composed of five core proteins: the inner membrane proteins TolA, TolQ and TolR, the periplasmic protein TolB and the outer membrane protein Pal. They form a network linking the inner and outer membranes and the peptidoglycan layer.</text>
</comment>
<comment type="subcellular location">
    <subcellularLocation>
        <location evidence="1">Periplasm</location>
    </subcellularLocation>
</comment>
<comment type="similarity">
    <text evidence="1">Belongs to the TolB family.</text>
</comment>
<gene>
    <name evidence="1" type="primary">tolB</name>
    <name type="ordered locus">BR1697</name>
    <name type="ordered locus">BS1330_I1691</name>
</gene>
<name>TOLB_BRUSU</name>
<accession>Q8FZ07</accession>
<accession>G0K6V9</accession>
<feature type="signal peptide" evidence="1">
    <location>
        <begin position="1"/>
        <end position="33"/>
    </location>
</feature>
<feature type="chain" id="PRO_0000034631" description="Tol-Pal system protein TolB" evidence="1">
    <location>
        <begin position="34"/>
        <end position="443"/>
    </location>
</feature>
<dbReference type="EMBL" id="AE014291">
    <property type="protein sequence ID" value="AAN30597.1"/>
    <property type="molecule type" value="Genomic_DNA"/>
</dbReference>
<dbReference type="EMBL" id="CP002997">
    <property type="protein sequence ID" value="AEM19014.1"/>
    <property type="molecule type" value="Genomic_DNA"/>
</dbReference>
<dbReference type="RefSeq" id="WP_006192496.1">
    <property type="nucleotide sequence ID" value="NZ_KN046804.1"/>
</dbReference>
<dbReference type="SMR" id="Q8FZ07"/>
<dbReference type="GeneID" id="45052674"/>
<dbReference type="KEGG" id="bms:BR1697"/>
<dbReference type="KEGG" id="bsi:BS1330_I1691"/>
<dbReference type="PATRIC" id="fig|204722.22.peg.157"/>
<dbReference type="HOGENOM" id="CLU_047123_0_0_5"/>
<dbReference type="PhylomeDB" id="Q8FZ07"/>
<dbReference type="Proteomes" id="UP000007104">
    <property type="component" value="Chromosome I"/>
</dbReference>
<dbReference type="GO" id="GO:0042597">
    <property type="term" value="C:periplasmic space"/>
    <property type="evidence" value="ECO:0007669"/>
    <property type="project" value="UniProtKB-SubCell"/>
</dbReference>
<dbReference type="GO" id="GO:0051301">
    <property type="term" value="P:cell division"/>
    <property type="evidence" value="ECO:0007669"/>
    <property type="project" value="UniProtKB-UniRule"/>
</dbReference>
<dbReference type="GO" id="GO:0017038">
    <property type="term" value="P:protein import"/>
    <property type="evidence" value="ECO:0007669"/>
    <property type="project" value="InterPro"/>
</dbReference>
<dbReference type="Gene3D" id="2.120.10.30">
    <property type="entry name" value="TolB, C-terminal domain"/>
    <property type="match status" value="1"/>
</dbReference>
<dbReference type="Gene3D" id="3.40.50.10070">
    <property type="entry name" value="TolB, N-terminal domain"/>
    <property type="match status" value="1"/>
</dbReference>
<dbReference type="HAMAP" id="MF_00671">
    <property type="entry name" value="TolB"/>
    <property type="match status" value="1"/>
</dbReference>
<dbReference type="InterPro" id="IPR011042">
    <property type="entry name" value="6-blade_b-propeller_TolB-like"/>
</dbReference>
<dbReference type="InterPro" id="IPR011659">
    <property type="entry name" value="PD40"/>
</dbReference>
<dbReference type="InterPro" id="IPR014167">
    <property type="entry name" value="Tol-Pal_TolB"/>
</dbReference>
<dbReference type="InterPro" id="IPR007195">
    <property type="entry name" value="TolB_N"/>
</dbReference>
<dbReference type="NCBIfam" id="TIGR02800">
    <property type="entry name" value="propeller_TolB"/>
    <property type="match status" value="1"/>
</dbReference>
<dbReference type="PANTHER" id="PTHR36842:SF1">
    <property type="entry name" value="PROTEIN TOLB"/>
    <property type="match status" value="1"/>
</dbReference>
<dbReference type="PANTHER" id="PTHR36842">
    <property type="entry name" value="PROTEIN TOLB HOMOLOG"/>
    <property type="match status" value="1"/>
</dbReference>
<dbReference type="Pfam" id="PF07676">
    <property type="entry name" value="PD40"/>
    <property type="match status" value="3"/>
</dbReference>
<dbReference type="Pfam" id="PF04052">
    <property type="entry name" value="TolB_N"/>
    <property type="match status" value="1"/>
</dbReference>
<dbReference type="SUPFAM" id="SSF52964">
    <property type="entry name" value="TolB, N-terminal domain"/>
    <property type="match status" value="1"/>
</dbReference>
<dbReference type="SUPFAM" id="SSF69304">
    <property type="entry name" value="Tricorn protease N-terminal domain"/>
    <property type="match status" value="1"/>
</dbReference>
<organism>
    <name type="scientific">Brucella suis biovar 1 (strain 1330)</name>
    <dbReference type="NCBI Taxonomy" id="204722"/>
    <lineage>
        <taxon>Bacteria</taxon>
        <taxon>Pseudomonadati</taxon>
        <taxon>Pseudomonadota</taxon>
        <taxon>Alphaproteobacteria</taxon>
        <taxon>Hyphomicrobiales</taxon>
        <taxon>Brucellaceae</taxon>
        <taxon>Brucella/Ochrobactrum group</taxon>
        <taxon>Brucella</taxon>
    </lineage>
</organism>